<feature type="chain" id="PRO_1000144246" description="Large ribosomal subunit protein uL14">
    <location>
        <begin position="1"/>
        <end position="122"/>
    </location>
</feature>
<accession>B1IGE4</accession>
<name>RL14_CLOBK</name>
<reference key="1">
    <citation type="journal article" date="2007" name="PLoS ONE">
        <title>Analysis of the neurotoxin complex genes in Clostridium botulinum A1-A4 and B1 strains: BoNT/A3, /Ba4 and /B1 clusters are located within plasmids.</title>
        <authorList>
            <person name="Smith T.J."/>
            <person name="Hill K.K."/>
            <person name="Foley B.T."/>
            <person name="Detter J.C."/>
            <person name="Munk A.C."/>
            <person name="Bruce D.C."/>
            <person name="Doggett N.A."/>
            <person name="Smith L.A."/>
            <person name="Marks J.D."/>
            <person name="Xie G."/>
            <person name="Brettin T.S."/>
        </authorList>
    </citation>
    <scope>NUCLEOTIDE SEQUENCE [LARGE SCALE GENOMIC DNA]</scope>
    <source>
        <strain>Okra / Type B1</strain>
    </source>
</reference>
<dbReference type="EMBL" id="CP000939">
    <property type="protein sequence ID" value="ACA43285.1"/>
    <property type="molecule type" value="Genomic_DNA"/>
</dbReference>
<dbReference type="RefSeq" id="WP_003357295.1">
    <property type="nucleotide sequence ID" value="NC_010516.1"/>
</dbReference>
<dbReference type="SMR" id="B1IGE4"/>
<dbReference type="GeneID" id="92940240"/>
<dbReference type="KEGG" id="cbb:CLD_1034"/>
<dbReference type="HOGENOM" id="CLU_095071_2_1_9"/>
<dbReference type="Proteomes" id="UP000008541">
    <property type="component" value="Chromosome"/>
</dbReference>
<dbReference type="GO" id="GO:0022625">
    <property type="term" value="C:cytosolic large ribosomal subunit"/>
    <property type="evidence" value="ECO:0007669"/>
    <property type="project" value="TreeGrafter"/>
</dbReference>
<dbReference type="GO" id="GO:0070180">
    <property type="term" value="F:large ribosomal subunit rRNA binding"/>
    <property type="evidence" value="ECO:0007669"/>
    <property type="project" value="TreeGrafter"/>
</dbReference>
<dbReference type="GO" id="GO:0003735">
    <property type="term" value="F:structural constituent of ribosome"/>
    <property type="evidence" value="ECO:0007669"/>
    <property type="project" value="InterPro"/>
</dbReference>
<dbReference type="GO" id="GO:0006412">
    <property type="term" value="P:translation"/>
    <property type="evidence" value="ECO:0007669"/>
    <property type="project" value="UniProtKB-UniRule"/>
</dbReference>
<dbReference type="CDD" id="cd00337">
    <property type="entry name" value="Ribosomal_uL14"/>
    <property type="match status" value="1"/>
</dbReference>
<dbReference type="FunFam" id="2.40.150.20:FF:000001">
    <property type="entry name" value="50S ribosomal protein L14"/>
    <property type="match status" value="1"/>
</dbReference>
<dbReference type="Gene3D" id="2.40.150.20">
    <property type="entry name" value="Ribosomal protein L14"/>
    <property type="match status" value="1"/>
</dbReference>
<dbReference type="HAMAP" id="MF_01367">
    <property type="entry name" value="Ribosomal_uL14"/>
    <property type="match status" value="1"/>
</dbReference>
<dbReference type="InterPro" id="IPR000218">
    <property type="entry name" value="Ribosomal_uL14"/>
</dbReference>
<dbReference type="InterPro" id="IPR005745">
    <property type="entry name" value="Ribosomal_uL14_bac-type"/>
</dbReference>
<dbReference type="InterPro" id="IPR019972">
    <property type="entry name" value="Ribosomal_uL14_CS"/>
</dbReference>
<dbReference type="InterPro" id="IPR036853">
    <property type="entry name" value="Ribosomal_uL14_sf"/>
</dbReference>
<dbReference type="NCBIfam" id="TIGR01067">
    <property type="entry name" value="rplN_bact"/>
    <property type="match status" value="1"/>
</dbReference>
<dbReference type="PANTHER" id="PTHR11761">
    <property type="entry name" value="50S/60S RIBOSOMAL PROTEIN L14/L23"/>
    <property type="match status" value="1"/>
</dbReference>
<dbReference type="PANTHER" id="PTHR11761:SF3">
    <property type="entry name" value="LARGE RIBOSOMAL SUBUNIT PROTEIN UL14M"/>
    <property type="match status" value="1"/>
</dbReference>
<dbReference type="Pfam" id="PF00238">
    <property type="entry name" value="Ribosomal_L14"/>
    <property type="match status" value="1"/>
</dbReference>
<dbReference type="SMART" id="SM01374">
    <property type="entry name" value="Ribosomal_L14"/>
    <property type="match status" value="1"/>
</dbReference>
<dbReference type="SUPFAM" id="SSF50193">
    <property type="entry name" value="Ribosomal protein L14"/>
    <property type="match status" value="1"/>
</dbReference>
<dbReference type="PROSITE" id="PS00049">
    <property type="entry name" value="RIBOSOMAL_L14"/>
    <property type="match status" value="1"/>
</dbReference>
<sequence length="122" mass="13268">MIQQQTRLKVADNSGAKEIMCIRVLGGSHRKWGNIGDVIVASVKSATPGGVVKKGEVVKAVIVRSVKGLRRADGSYIKFDENAAVIIKDDKNPKGTRIFGPVARELRDKEFNKILSLAPEVL</sequence>
<proteinExistence type="inferred from homology"/>
<keyword id="KW-0687">Ribonucleoprotein</keyword>
<keyword id="KW-0689">Ribosomal protein</keyword>
<keyword id="KW-0694">RNA-binding</keyword>
<keyword id="KW-0699">rRNA-binding</keyword>
<protein>
    <recommendedName>
        <fullName evidence="1">Large ribosomal subunit protein uL14</fullName>
    </recommendedName>
    <alternativeName>
        <fullName evidence="2">50S ribosomal protein L14</fullName>
    </alternativeName>
</protein>
<organism>
    <name type="scientific">Clostridium botulinum (strain Okra / Type B1)</name>
    <dbReference type="NCBI Taxonomy" id="498213"/>
    <lineage>
        <taxon>Bacteria</taxon>
        <taxon>Bacillati</taxon>
        <taxon>Bacillota</taxon>
        <taxon>Clostridia</taxon>
        <taxon>Eubacteriales</taxon>
        <taxon>Clostridiaceae</taxon>
        <taxon>Clostridium</taxon>
    </lineage>
</organism>
<gene>
    <name evidence="1" type="primary">rplN</name>
    <name type="ordered locus">CLD_1034</name>
</gene>
<evidence type="ECO:0000255" key="1">
    <source>
        <dbReference type="HAMAP-Rule" id="MF_01367"/>
    </source>
</evidence>
<evidence type="ECO:0000305" key="2"/>
<comment type="function">
    <text evidence="1">Binds to 23S rRNA. Forms part of two intersubunit bridges in the 70S ribosome.</text>
</comment>
<comment type="subunit">
    <text evidence="1">Part of the 50S ribosomal subunit. Forms a cluster with proteins L3 and L19. In the 70S ribosome, L14 and L19 interact and together make contacts with the 16S rRNA in bridges B5 and B8.</text>
</comment>
<comment type="similarity">
    <text evidence="1">Belongs to the universal ribosomal protein uL14 family.</text>
</comment>